<accession>A6TZG1</accession>
<sequence length="291" mass="32339">MFIIELIKGIILGVVEGLTEFAPVSSTGHMILVDDMWLKSSEFLGSQSAFTFKIVIQLGSVFAAAWVFRERFLEILHIGKHKHVEGENDQQRRSKPRRLNLLHVLVGMVPAGILGLLFDDFIEEHLFSVPTVMIGLFVGAIYMIIADKYSVKVKNPQTVDQINYFQAFVIGISQAVAMWPGFSRSGSTISTGVLMKLNHKAASDFTFIMAVPIMLAASGLSLLKHYQDIQIADIPFYILGFLAAFTVGLIAIKTFLHLINKIKLIPFAIYRIVLVIFIAILYFGFGIGKGI</sequence>
<comment type="function">
    <text evidence="1">Catalyzes the dephosphorylation of undecaprenyl diphosphate (UPP). Confers resistance to bacitracin.</text>
</comment>
<comment type="catalytic activity">
    <reaction evidence="1">
        <text>di-trans,octa-cis-undecaprenyl diphosphate + H2O = di-trans,octa-cis-undecaprenyl phosphate + phosphate + H(+)</text>
        <dbReference type="Rhea" id="RHEA:28094"/>
        <dbReference type="ChEBI" id="CHEBI:15377"/>
        <dbReference type="ChEBI" id="CHEBI:15378"/>
        <dbReference type="ChEBI" id="CHEBI:43474"/>
        <dbReference type="ChEBI" id="CHEBI:58405"/>
        <dbReference type="ChEBI" id="CHEBI:60392"/>
        <dbReference type="EC" id="3.6.1.27"/>
    </reaction>
</comment>
<comment type="subcellular location">
    <subcellularLocation>
        <location evidence="1">Cell membrane</location>
        <topology evidence="1">Multi-pass membrane protein</topology>
    </subcellularLocation>
</comment>
<comment type="miscellaneous">
    <text>Bacitracin is thought to be involved in the inhibition of peptidoglycan synthesis by sequestering undecaprenyl diphosphate, thereby reducing the pool of lipid carrier available.</text>
</comment>
<comment type="similarity">
    <text evidence="1">Belongs to the UppP family.</text>
</comment>
<gene>
    <name evidence="1" type="primary">uppP</name>
    <name type="ordered locus">SaurJH1_0723</name>
</gene>
<dbReference type="EC" id="3.6.1.27" evidence="1"/>
<dbReference type="EMBL" id="CP000736">
    <property type="protein sequence ID" value="ABR51579.1"/>
    <property type="molecule type" value="Genomic_DNA"/>
</dbReference>
<dbReference type="SMR" id="A6TZG1"/>
<dbReference type="KEGG" id="sah:SaurJH1_0723"/>
<dbReference type="HOGENOM" id="CLU_060296_2_0_9"/>
<dbReference type="GO" id="GO:0005886">
    <property type="term" value="C:plasma membrane"/>
    <property type="evidence" value="ECO:0007669"/>
    <property type="project" value="UniProtKB-SubCell"/>
</dbReference>
<dbReference type="GO" id="GO:0050380">
    <property type="term" value="F:undecaprenyl-diphosphatase activity"/>
    <property type="evidence" value="ECO:0007669"/>
    <property type="project" value="UniProtKB-UniRule"/>
</dbReference>
<dbReference type="GO" id="GO:0071555">
    <property type="term" value="P:cell wall organization"/>
    <property type="evidence" value="ECO:0007669"/>
    <property type="project" value="UniProtKB-KW"/>
</dbReference>
<dbReference type="GO" id="GO:0009252">
    <property type="term" value="P:peptidoglycan biosynthetic process"/>
    <property type="evidence" value="ECO:0007669"/>
    <property type="project" value="UniProtKB-KW"/>
</dbReference>
<dbReference type="GO" id="GO:0008360">
    <property type="term" value="P:regulation of cell shape"/>
    <property type="evidence" value="ECO:0007669"/>
    <property type="project" value="UniProtKB-KW"/>
</dbReference>
<dbReference type="GO" id="GO:0046677">
    <property type="term" value="P:response to antibiotic"/>
    <property type="evidence" value="ECO:0007669"/>
    <property type="project" value="UniProtKB-UniRule"/>
</dbReference>
<dbReference type="HAMAP" id="MF_01006">
    <property type="entry name" value="Undec_diphosphatase"/>
    <property type="match status" value="1"/>
</dbReference>
<dbReference type="InterPro" id="IPR003824">
    <property type="entry name" value="UppP"/>
</dbReference>
<dbReference type="NCBIfam" id="NF001390">
    <property type="entry name" value="PRK00281.1-4"/>
    <property type="match status" value="1"/>
</dbReference>
<dbReference type="NCBIfam" id="TIGR00753">
    <property type="entry name" value="undec_PP_bacA"/>
    <property type="match status" value="1"/>
</dbReference>
<dbReference type="PANTHER" id="PTHR30622">
    <property type="entry name" value="UNDECAPRENYL-DIPHOSPHATASE"/>
    <property type="match status" value="1"/>
</dbReference>
<dbReference type="PANTHER" id="PTHR30622:SF3">
    <property type="entry name" value="UNDECAPRENYL-DIPHOSPHATASE"/>
    <property type="match status" value="1"/>
</dbReference>
<dbReference type="Pfam" id="PF02673">
    <property type="entry name" value="BacA"/>
    <property type="match status" value="1"/>
</dbReference>
<reference key="1">
    <citation type="submission" date="2007-06" db="EMBL/GenBank/DDBJ databases">
        <title>Complete sequence of chromosome of Staphylococcus aureus subsp. aureus JH1.</title>
        <authorList>
            <consortium name="US DOE Joint Genome Institute"/>
            <person name="Copeland A."/>
            <person name="Lucas S."/>
            <person name="Lapidus A."/>
            <person name="Barry K."/>
            <person name="Detter J.C."/>
            <person name="Glavina del Rio T."/>
            <person name="Hammon N."/>
            <person name="Israni S."/>
            <person name="Dalin E."/>
            <person name="Tice H."/>
            <person name="Pitluck S."/>
            <person name="Chain P."/>
            <person name="Malfatti S."/>
            <person name="Shin M."/>
            <person name="Vergez L."/>
            <person name="Schmutz J."/>
            <person name="Larimer F."/>
            <person name="Land M."/>
            <person name="Hauser L."/>
            <person name="Kyrpides N."/>
            <person name="Ivanova N."/>
            <person name="Tomasz A."/>
            <person name="Richardson P."/>
        </authorList>
    </citation>
    <scope>NUCLEOTIDE SEQUENCE [LARGE SCALE GENOMIC DNA]</scope>
    <source>
        <strain>JH1</strain>
    </source>
</reference>
<evidence type="ECO:0000255" key="1">
    <source>
        <dbReference type="HAMAP-Rule" id="MF_01006"/>
    </source>
</evidence>
<protein>
    <recommendedName>
        <fullName evidence="1">Undecaprenyl-diphosphatase</fullName>
        <ecNumber evidence="1">3.6.1.27</ecNumber>
    </recommendedName>
    <alternativeName>
        <fullName evidence="1">Bacitracin resistance protein</fullName>
    </alternativeName>
    <alternativeName>
        <fullName evidence="1">Undecaprenyl pyrophosphate phosphatase</fullName>
    </alternativeName>
</protein>
<feature type="chain" id="PRO_1000083992" description="Undecaprenyl-diphosphatase">
    <location>
        <begin position="1"/>
        <end position="291"/>
    </location>
</feature>
<feature type="transmembrane region" description="Helical" evidence="1">
    <location>
        <begin position="1"/>
        <end position="21"/>
    </location>
</feature>
<feature type="transmembrane region" description="Helical" evidence="1">
    <location>
        <begin position="48"/>
        <end position="68"/>
    </location>
</feature>
<feature type="transmembrane region" description="Helical" evidence="1">
    <location>
        <begin position="102"/>
        <end position="122"/>
    </location>
</feature>
<feature type="transmembrane region" description="Helical" evidence="1">
    <location>
        <begin position="126"/>
        <end position="146"/>
    </location>
</feature>
<feature type="transmembrane region" description="Helical" evidence="1">
    <location>
        <begin position="162"/>
        <end position="182"/>
    </location>
</feature>
<feature type="transmembrane region" description="Helical" evidence="1">
    <location>
        <begin position="203"/>
        <end position="223"/>
    </location>
</feature>
<feature type="transmembrane region" description="Helical" evidence="1">
    <location>
        <begin position="231"/>
        <end position="251"/>
    </location>
</feature>
<feature type="transmembrane region" description="Helical" evidence="1">
    <location>
        <begin position="267"/>
        <end position="287"/>
    </location>
</feature>
<organism>
    <name type="scientific">Staphylococcus aureus (strain JH1)</name>
    <dbReference type="NCBI Taxonomy" id="359787"/>
    <lineage>
        <taxon>Bacteria</taxon>
        <taxon>Bacillati</taxon>
        <taxon>Bacillota</taxon>
        <taxon>Bacilli</taxon>
        <taxon>Bacillales</taxon>
        <taxon>Staphylococcaceae</taxon>
        <taxon>Staphylococcus</taxon>
    </lineage>
</organism>
<proteinExistence type="inferred from homology"/>
<keyword id="KW-0046">Antibiotic resistance</keyword>
<keyword id="KW-1003">Cell membrane</keyword>
<keyword id="KW-0133">Cell shape</keyword>
<keyword id="KW-0961">Cell wall biogenesis/degradation</keyword>
<keyword id="KW-0378">Hydrolase</keyword>
<keyword id="KW-0472">Membrane</keyword>
<keyword id="KW-0573">Peptidoglycan synthesis</keyword>
<keyword id="KW-0812">Transmembrane</keyword>
<keyword id="KW-1133">Transmembrane helix</keyword>
<name>UPPP_STAA2</name>